<comment type="function">
    <text evidence="3">Involved in regulation of glutamate metabolism. Acts as a phosphorylation-dependent molecular switch that modulates the activities of Kgd and Gdh.</text>
</comment>
<comment type="subunit">
    <text evidence="1">Monomer (By similarity). Binds via its FHA domain to Kgd, Gdh, and the N-terminal region of PknG.</text>
</comment>
<comment type="PTM">
    <text evidence="1 3">Phosphorylated on Thr-21 by PknB (By similarity). Phosphorylated on Thr-20 by PknG. Phosphorylation at either Thr-20 or Thr-21 prevents binding to target enzymes.</text>
</comment>
<comment type="sequence caution" evidence="4">
    <conflict type="erroneous initiation">
        <sequence resource="EMBL-CDS" id="ABK73997"/>
    </conflict>
    <text>Truncated N-terminus.</text>
</comment>
<protein>
    <recommendedName>
        <fullName>Glycogen accumulation regulator GarA</fullName>
    </recommendedName>
</protein>
<dbReference type="EMBL" id="CP000480">
    <property type="protein sequence ID" value="ABK73997.1"/>
    <property type="status" value="ALT_INIT"/>
    <property type="molecule type" value="Genomic_DNA"/>
</dbReference>
<dbReference type="EMBL" id="CP001663">
    <property type="protein sequence ID" value="AFP40024.1"/>
    <property type="molecule type" value="Genomic_DNA"/>
</dbReference>
<dbReference type="RefSeq" id="WP_014877774.1">
    <property type="nucleotide sequence ID" value="NZ_SIJM01000008.1"/>
</dbReference>
<dbReference type="RefSeq" id="YP_887950.1">
    <property type="nucleotide sequence ID" value="NC_008596.1"/>
</dbReference>
<dbReference type="PDB" id="6I2Q">
    <property type="method" value="X-ray"/>
    <property type="resolution" value="2.15 A"/>
    <property type="chains" value="B=45-158"/>
</dbReference>
<dbReference type="PDB" id="6I2R">
    <property type="method" value="X-ray"/>
    <property type="resolution" value="2.20 A"/>
    <property type="chains" value="B/D=45-158"/>
</dbReference>
<dbReference type="PDB" id="6I2S">
    <property type="method" value="X-ray"/>
    <property type="resolution" value="2.40 A"/>
    <property type="chains" value="B=45-158"/>
</dbReference>
<dbReference type="PDB" id="8P5R">
    <property type="method" value="X-ray"/>
    <property type="resolution" value="4.56 A"/>
    <property type="chains" value="G/H/I/J/K/L=1-158"/>
</dbReference>
<dbReference type="PDBsum" id="6I2Q"/>
<dbReference type="PDBsum" id="6I2R"/>
<dbReference type="PDBsum" id="6I2S"/>
<dbReference type="PDBsum" id="8P5R"/>
<dbReference type="SMR" id="A0QYG2"/>
<dbReference type="IntAct" id="A0QYG2">
    <property type="interactions" value="3"/>
</dbReference>
<dbReference type="STRING" id="246196.MSMEG_3647"/>
<dbReference type="iPTMnet" id="A0QYG2"/>
<dbReference type="PaxDb" id="246196-MSMEI_3561"/>
<dbReference type="GeneID" id="93458401"/>
<dbReference type="KEGG" id="msb:LJ00_18135"/>
<dbReference type="KEGG" id="msg:MSMEI_3561"/>
<dbReference type="KEGG" id="msm:MSMEG_3647"/>
<dbReference type="PATRIC" id="fig|246196.19.peg.3595"/>
<dbReference type="eggNOG" id="COG1716">
    <property type="taxonomic scope" value="Bacteria"/>
</dbReference>
<dbReference type="OrthoDB" id="9815925at2"/>
<dbReference type="Proteomes" id="UP000000757">
    <property type="component" value="Chromosome"/>
</dbReference>
<dbReference type="Proteomes" id="UP000006158">
    <property type="component" value="Chromosome"/>
</dbReference>
<dbReference type="CDD" id="cd22720">
    <property type="entry name" value="FHA_GarA-like"/>
    <property type="match status" value="1"/>
</dbReference>
<dbReference type="Gene3D" id="2.60.200.20">
    <property type="match status" value="1"/>
</dbReference>
<dbReference type="InterPro" id="IPR050923">
    <property type="entry name" value="Cell_Proc_Reg/RNA_Proc"/>
</dbReference>
<dbReference type="InterPro" id="IPR000253">
    <property type="entry name" value="FHA_dom"/>
</dbReference>
<dbReference type="InterPro" id="IPR008984">
    <property type="entry name" value="SMAD_FHA_dom_sf"/>
</dbReference>
<dbReference type="PANTHER" id="PTHR23308">
    <property type="entry name" value="NUCLEAR INHIBITOR OF PROTEIN PHOSPHATASE-1"/>
    <property type="match status" value="1"/>
</dbReference>
<dbReference type="Pfam" id="PF00498">
    <property type="entry name" value="FHA"/>
    <property type="match status" value="1"/>
</dbReference>
<dbReference type="SMART" id="SM00240">
    <property type="entry name" value="FHA"/>
    <property type="match status" value="1"/>
</dbReference>
<dbReference type="SUPFAM" id="SSF49879">
    <property type="entry name" value="SMAD/FHA domain"/>
    <property type="match status" value="1"/>
</dbReference>
<dbReference type="PROSITE" id="PS50006">
    <property type="entry name" value="FHA_DOMAIN"/>
    <property type="match status" value="1"/>
</dbReference>
<name>GARA_MYCS2</name>
<sequence>MTDKDSNLGADQSEDVTVETTSVFRADFLNELDAPAAAGTEGAVSGVEGLPSGSALLVVKRGPNAGSRFLLDQPTTSAGRHPDSDIFLDDVTVSRRHAEFRLEGGEFQVVDVGSLNGTYVNREPVDSAVLANGDEVQIGKFRLVFLTGPKSDDSGSNA</sequence>
<feature type="chain" id="PRO_0000419534" description="Glycogen accumulation regulator GarA">
    <location>
        <begin position="1"/>
        <end position="158"/>
    </location>
</feature>
<feature type="domain" description="FHA" evidence="2">
    <location>
        <begin position="76"/>
        <end position="125"/>
    </location>
</feature>
<feature type="modified residue" description="Phosphothreonine; by PknG" evidence="3">
    <location>
        <position position="20"/>
    </location>
</feature>
<feature type="modified residue" description="Phosphothreonine; by PknB" evidence="1">
    <location>
        <position position="21"/>
    </location>
</feature>
<feature type="strand" evidence="5">
    <location>
        <begin position="55"/>
        <end position="62"/>
    </location>
</feature>
<feature type="turn" evidence="5">
    <location>
        <begin position="63"/>
        <end position="66"/>
    </location>
</feature>
<feature type="strand" evidence="5">
    <location>
        <begin position="68"/>
        <end position="71"/>
    </location>
</feature>
<feature type="strand" evidence="5">
    <location>
        <begin position="73"/>
        <end position="81"/>
    </location>
</feature>
<feature type="strand" evidence="5">
    <location>
        <begin position="84"/>
        <end position="87"/>
    </location>
</feature>
<feature type="strand" evidence="5">
    <location>
        <begin position="98"/>
        <end position="103"/>
    </location>
</feature>
<feature type="strand" evidence="5">
    <location>
        <begin position="106"/>
        <end position="111"/>
    </location>
</feature>
<feature type="strand" evidence="5">
    <location>
        <begin position="118"/>
        <end position="120"/>
    </location>
</feature>
<feature type="strand" evidence="5">
    <location>
        <begin position="123"/>
        <end position="130"/>
    </location>
</feature>
<feature type="strand" evidence="5">
    <location>
        <begin position="135"/>
        <end position="138"/>
    </location>
</feature>
<feature type="strand" evidence="5">
    <location>
        <begin position="141"/>
        <end position="146"/>
    </location>
</feature>
<organism>
    <name type="scientific">Mycolicibacterium smegmatis (strain ATCC 700084 / mc(2)155)</name>
    <name type="common">Mycobacterium smegmatis</name>
    <dbReference type="NCBI Taxonomy" id="246196"/>
    <lineage>
        <taxon>Bacteria</taxon>
        <taxon>Bacillati</taxon>
        <taxon>Actinomycetota</taxon>
        <taxon>Actinomycetes</taxon>
        <taxon>Mycobacteriales</taxon>
        <taxon>Mycobacteriaceae</taxon>
        <taxon>Mycolicibacterium</taxon>
    </lineage>
</organism>
<accession>A0QYG2</accession>
<accession>I7GBT9</accession>
<evidence type="ECO:0000250" key="1"/>
<evidence type="ECO:0000255" key="2">
    <source>
        <dbReference type="PROSITE-ProRule" id="PRU00086"/>
    </source>
</evidence>
<evidence type="ECO:0000269" key="3">
    <source>
    </source>
</evidence>
<evidence type="ECO:0000305" key="4"/>
<evidence type="ECO:0007829" key="5">
    <source>
        <dbReference type="PDB" id="6I2Q"/>
    </source>
</evidence>
<proteinExistence type="evidence at protein level"/>
<gene>
    <name type="primary">garA</name>
    <name type="ordered locus">MSMEG_3647</name>
    <name type="ordered locus">MSMEI_3561</name>
</gene>
<reference key="1">
    <citation type="submission" date="2006-10" db="EMBL/GenBank/DDBJ databases">
        <authorList>
            <person name="Fleischmann R.D."/>
            <person name="Dodson R.J."/>
            <person name="Haft D.H."/>
            <person name="Merkel J.S."/>
            <person name="Nelson W.C."/>
            <person name="Fraser C.M."/>
        </authorList>
    </citation>
    <scope>NUCLEOTIDE SEQUENCE [LARGE SCALE GENOMIC DNA]</scope>
    <source>
        <strain>ATCC 700084 / mc(2)155</strain>
    </source>
</reference>
<reference key="2">
    <citation type="journal article" date="2007" name="Genome Biol.">
        <title>Interrupted coding sequences in Mycobacterium smegmatis: authentic mutations or sequencing errors?</title>
        <authorList>
            <person name="Deshayes C."/>
            <person name="Perrodou E."/>
            <person name="Gallien S."/>
            <person name="Euphrasie D."/>
            <person name="Schaeffer C."/>
            <person name="Van-Dorsselaer A."/>
            <person name="Poch O."/>
            <person name="Lecompte O."/>
            <person name="Reyrat J.-M."/>
        </authorList>
    </citation>
    <scope>NUCLEOTIDE SEQUENCE [LARGE SCALE GENOMIC DNA]</scope>
    <source>
        <strain>ATCC 700084 / mc(2)155</strain>
    </source>
</reference>
<reference key="3">
    <citation type="journal article" date="2009" name="Genome Res.">
        <title>Ortho-proteogenomics: multiple proteomes investigation through orthology and a new MS-based protocol.</title>
        <authorList>
            <person name="Gallien S."/>
            <person name="Perrodou E."/>
            <person name="Carapito C."/>
            <person name="Deshayes C."/>
            <person name="Reyrat J.-M."/>
            <person name="Van Dorsselaer A."/>
            <person name="Poch O."/>
            <person name="Schaeffer C."/>
            <person name="Lecompte O."/>
        </authorList>
    </citation>
    <scope>NUCLEOTIDE SEQUENCE [LARGE SCALE GENOMIC DNA]</scope>
    <source>
        <strain>ATCC 700084 / mc(2)155</strain>
    </source>
</reference>
<reference key="4">
    <citation type="journal article" date="2008" name="Mol. Microbiol.">
        <title>Regulation of glutamate metabolism by protein kinases in mycobacteria.</title>
        <authorList>
            <person name="O'Hare H.M."/>
            <person name="Duran R."/>
            <person name="Cervenansky C."/>
            <person name="Bellinzoni M."/>
            <person name="Wehenkel A.M."/>
            <person name="Pritsch O."/>
            <person name="Obal G."/>
            <person name="Baumgartner J."/>
            <person name="Vialaret J."/>
            <person name="Johnsson K."/>
            <person name="Alzari P.M."/>
        </authorList>
    </citation>
    <scope>FUNCTION</scope>
    <scope>INTERACTION WITH KGD; GDH AND PKNG</scope>
    <scope>PHOSPHORYLATION AT THR-20</scope>
    <source>
        <strain>ATCC 700084 / mc(2)155</strain>
    </source>
</reference>
<keyword id="KW-0002">3D-structure</keyword>
<keyword id="KW-0597">Phosphoprotein</keyword>
<keyword id="KW-1185">Reference proteome</keyword>